<dbReference type="EC" id="5.3.1.16" evidence="1"/>
<dbReference type="EMBL" id="AM180088">
    <property type="protein sequence ID" value="CAJ51155.1"/>
    <property type="molecule type" value="Genomic_DNA"/>
</dbReference>
<dbReference type="RefSeq" id="WP_011570322.1">
    <property type="nucleotide sequence ID" value="NC_008212.1"/>
</dbReference>
<dbReference type="SMR" id="Q18DL2"/>
<dbReference type="STRING" id="362976.HQ_1025A"/>
<dbReference type="GeneID" id="4194115"/>
<dbReference type="KEGG" id="hwa:HQ_1025A"/>
<dbReference type="eggNOG" id="arCOG00618">
    <property type="taxonomic scope" value="Archaea"/>
</dbReference>
<dbReference type="HOGENOM" id="CLU_048577_1_1_2"/>
<dbReference type="UniPathway" id="UPA00031">
    <property type="reaction ID" value="UER00009"/>
</dbReference>
<dbReference type="Proteomes" id="UP000001975">
    <property type="component" value="Chromosome"/>
</dbReference>
<dbReference type="GO" id="GO:0005737">
    <property type="term" value="C:cytoplasm"/>
    <property type="evidence" value="ECO:0007669"/>
    <property type="project" value="UniProtKB-SubCell"/>
</dbReference>
<dbReference type="GO" id="GO:0003949">
    <property type="term" value="F:1-(5-phosphoribosyl)-5-[(5-phosphoribosylamino)methylideneamino]imidazole-4-carboxamide isomerase activity"/>
    <property type="evidence" value="ECO:0007669"/>
    <property type="project" value="UniProtKB-UniRule"/>
</dbReference>
<dbReference type="GO" id="GO:0000105">
    <property type="term" value="P:L-histidine biosynthetic process"/>
    <property type="evidence" value="ECO:0007669"/>
    <property type="project" value="UniProtKB-UniRule"/>
</dbReference>
<dbReference type="GO" id="GO:0000162">
    <property type="term" value="P:L-tryptophan biosynthetic process"/>
    <property type="evidence" value="ECO:0007669"/>
    <property type="project" value="TreeGrafter"/>
</dbReference>
<dbReference type="CDD" id="cd04732">
    <property type="entry name" value="HisA"/>
    <property type="match status" value="1"/>
</dbReference>
<dbReference type="FunFam" id="3.20.20.70:FF:000009">
    <property type="entry name" value="1-(5-phosphoribosyl)-5-[(5-phosphoribosylamino)methylideneamino] imidazole-4-carboxamide isomerase"/>
    <property type="match status" value="1"/>
</dbReference>
<dbReference type="Gene3D" id="3.20.20.70">
    <property type="entry name" value="Aldolase class I"/>
    <property type="match status" value="1"/>
</dbReference>
<dbReference type="HAMAP" id="MF_01014">
    <property type="entry name" value="HisA"/>
    <property type="match status" value="1"/>
</dbReference>
<dbReference type="InterPro" id="IPR013785">
    <property type="entry name" value="Aldolase_TIM"/>
</dbReference>
<dbReference type="InterPro" id="IPR006062">
    <property type="entry name" value="His_biosynth"/>
</dbReference>
<dbReference type="InterPro" id="IPR006063">
    <property type="entry name" value="HisA_bact_arch"/>
</dbReference>
<dbReference type="InterPro" id="IPR044524">
    <property type="entry name" value="Isoase_HisA-like"/>
</dbReference>
<dbReference type="InterPro" id="IPR023016">
    <property type="entry name" value="Isoase_HisA-like_bact"/>
</dbReference>
<dbReference type="InterPro" id="IPR011060">
    <property type="entry name" value="RibuloseP-bd_barrel"/>
</dbReference>
<dbReference type="NCBIfam" id="TIGR00007">
    <property type="entry name" value="1-(5-phosphoribosyl)-5-[(5-phosphoribosylamino)methylideneamino]imidazole-4-carboxamide isomerase"/>
    <property type="match status" value="1"/>
</dbReference>
<dbReference type="NCBIfam" id="NF010112">
    <property type="entry name" value="PRK13585.1"/>
    <property type="match status" value="1"/>
</dbReference>
<dbReference type="PANTHER" id="PTHR43090">
    <property type="entry name" value="1-(5-PHOSPHORIBOSYL)-5-[(5-PHOSPHORIBOSYLAMINO)METHYLIDENEAMINO] IMIDAZOLE-4-CARBOXAMIDE ISOMERASE"/>
    <property type="match status" value="1"/>
</dbReference>
<dbReference type="PANTHER" id="PTHR43090:SF7">
    <property type="entry name" value="1-(5-PHOSPHORIBOSYL)-5-[(5-PHOSPHORIBOSYLAMINO)METHYLIDENEAMINO] IMIDAZOLE-4-CARBOXAMIDE ISOMERASE"/>
    <property type="match status" value="1"/>
</dbReference>
<dbReference type="Pfam" id="PF00977">
    <property type="entry name" value="His_biosynth"/>
    <property type="match status" value="1"/>
</dbReference>
<dbReference type="SUPFAM" id="SSF51366">
    <property type="entry name" value="Ribulose-phoshate binding barrel"/>
    <property type="match status" value="1"/>
</dbReference>
<protein>
    <recommendedName>
        <fullName evidence="1">1-(5-phosphoribosyl)-5-[(5-phosphoribosylamino)methylideneamino] imidazole-4-carboxamide isomerase</fullName>
        <ecNumber evidence="1">5.3.1.16</ecNumber>
    </recommendedName>
    <alternativeName>
        <fullName evidence="1">Phosphoribosylformimino-5-aminoimidazole carboxamide ribotide isomerase</fullName>
    </alternativeName>
</protein>
<proteinExistence type="inferred from homology"/>
<feature type="chain" id="PRO_0000290572" description="1-(5-phosphoribosyl)-5-[(5-phosphoribosylamino)methylideneamino] imidazole-4-carboxamide isomerase">
    <location>
        <begin position="1"/>
        <end position="245"/>
    </location>
</feature>
<feature type="active site" description="Proton acceptor" evidence="1">
    <location>
        <position position="15"/>
    </location>
</feature>
<feature type="active site" description="Proton donor" evidence="1">
    <location>
        <position position="135"/>
    </location>
</feature>
<organism>
    <name type="scientific">Haloquadratum walsbyi (strain DSM 16790 / HBSQ001)</name>
    <dbReference type="NCBI Taxonomy" id="362976"/>
    <lineage>
        <taxon>Archaea</taxon>
        <taxon>Methanobacteriati</taxon>
        <taxon>Methanobacteriota</taxon>
        <taxon>Stenosarchaea group</taxon>
        <taxon>Halobacteria</taxon>
        <taxon>Halobacteriales</taxon>
        <taxon>Haloferacaceae</taxon>
        <taxon>Haloquadratum</taxon>
    </lineage>
</organism>
<comment type="catalytic activity">
    <reaction evidence="1">
        <text>1-(5-phospho-beta-D-ribosyl)-5-[(5-phospho-beta-D-ribosylamino)methylideneamino]imidazole-4-carboxamide = 5-[(5-phospho-1-deoxy-D-ribulos-1-ylimino)methylamino]-1-(5-phospho-beta-D-ribosyl)imidazole-4-carboxamide</text>
        <dbReference type="Rhea" id="RHEA:15469"/>
        <dbReference type="ChEBI" id="CHEBI:58435"/>
        <dbReference type="ChEBI" id="CHEBI:58525"/>
        <dbReference type="EC" id="5.3.1.16"/>
    </reaction>
</comment>
<comment type="pathway">
    <text evidence="1">Amino-acid biosynthesis; L-histidine biosynthesis; L-histidine from 5-phospho-alpha-D-ribose 1-diphosphate: step 4/9.</text>
</comment>
<comment type="subcellular location">
    <subcellularLocation>
        <location evidence="1">Cytoplasm</location>
    </subcellularLocation>
</comment>
<comment type="similarity">
    <text evidence="1">Belongs to the HisA/HisF family.</text>
</comment>
<keyword id="KW-0028">Amino-acid biosynthesis</keyword>
<keyword id="KW-0963">Cytoplasm</keyword>
<keyword id="KW-0368">Histidine biosynthesis</keyword>
<keyword id="KW-0413">Isomerase</keyword>
<keyword id="KW-1185">Reference proteome</keyword>
<evidence type="ECO:0000255" key="1">
    <source>
        <dbReference type="HAMAP-Rule" id="MF_01014"/>
    </source>
</evidence>
<sequence length="245" mass="25310">MSTLFESFEVIPAVDMQDGDVVQLVQGERGTETRYGDPVVAAKQWVEAGAKTLHLVDLDGAFEGDRMNATAVDAIIDAVDIPVQLGGGIRTANDAASLLDRGVNRVILGTAAVENPDLVAELAESYPGRIIVSLDAADGEVVVSGWTESTGIDPAVAAARFADYGACGILFTDVDVEGKLAGIQSSVTARVIDAVDIPVIASGGVASLDDIQTLHTTGAAATVVGTALYENKFTLADAMEVCESD</sequence>
<accession>Q18DL2</accession>
<reference key="1">
    <citation type="journal article" date="2006" name="BMC Genomics">
        <title>The genome of the square archaeon Haloquadratum walsbyi: life at the limits of water activity.</title>
        <authorList>
            <person name="Bolhuis H."/>
            <person name="Palm P."/>
            <person name="Wende A."/>
            <person name="Falb M."/>
            <person name="Rampp M."/>
            <person name="Rodriguez-Valera F."/>
            <person name="Pfeiffer F."/>
            <person name="Oesterhelt D."/>
        </authorList>
    </citation>
    <scope>NUCLEOTIDE SEQUENCE [LARGE SCALE GENOMIC DNA]</scope>
    <source>
        <strain>DSM 16790 / HBSQ001</strain>
    </source>
</reference>
<name>HIS4_HALWD</name>
<gene>
    <name evidence="1" type="primary">hisA</name>
    <name type="ordered locus">HQ_1025A</name>
</gene>